<feature type="signal peptide" evidence="3">
    <location>
        <begin position="1"/>
        <end position="21"/>
    </location>
</feature>
<feature type="propeptide" id="PRO_0000401725" evidence="1">
    <location>
        <begin position="22"/>
        <end position="25"/>
    </location>
</feature>
<feature type="chain" id="PRO_0000401726" description="U6-lycotoxin-Ls1c">
    <location>
        <begin position="26"/>
        <end position="75"/>
    </location>
</feature>
<feature type="disulfide bond" evidence="2">
    <location>
        <begin position="27"/>
        <end position="42"/>
    </location>
</feature>
<feature type="disulfide bond" evidence="2">
    <location>
        <begin position="34"/>
        <end position="47"/>
    </location>
</feature>
<feature type="disulfide bond" evidence="2">
    <location>
        <begin position="41"/>
        <end position="65"/>
    </location>
</feature>
<feature type="disulfide bond" evidence="2">
    <location>
        <begin position="49"/>
        <end position="63"/>
    </location>
</feature>
<dbReference type="EMBL" id="EU926036">
    <property type="protein sequence ID" value="ACI41368.1"/>
    <property type="molecule type" value="mRNA"/>
</dbReference>
<dbReference type="EMBL" id="FM864040">
    <property type="protein sequence ID" value="CAS03637.1"/>
    <property type="molecule type" value="mRNA"/>
</dbReference>
<dbReference type="SMR" id="B6DCV2"/>
<dbReference type="ArachnoServer" id="AS000974">
    <property type="toxin name" value="U6-lycotoxin-Ls1c"/>
</dbReference>
<dbReference type="GO" id="GO:0005576">
    <property type="term" value="C:extracellular region"/>
    <property type="evidence" value="ECO:0007669"/>
    <property type="project" value="UniProtKB-SubCell"/>
</dbReference>
<dbReference type="GO" id="GO:0090729">
    <property type="term" value="F:toxin activity"/>
    <property type="evidence" value="ECO:0007669"/>
    <property type="project" value="UniProtKB-KW"/>
</dbReference>
<dbReference type="InterPro" id="IPR019553">
    <property type="entry name" value="Spider_toxin_CSTX_knottin"/>
</dbReference>
<dbReference type="Pfam" id="PF10530">
    <property type="entry name" value="Toxin_35"/>
    <property type="match status" value="1"/>
</dbReference>
<keyword id="KW-1015">Disulfide bond</keyword>
<keyword id="KW-0964">Secreted</keyword>
<keyword id="KW-0732">Signal</keyword>
<keyword id="KW-0800">Toxin</keyword>
<organism>
    <name type="scientific">Lycosa singoriensis</name>
    <name type="common">Wolf spider</name>
    <name type="synonym">Aranea singoriensis</name>
    <dbReference type="NCBI Taxonomy" id="434756"/>
    <lineage>
        <taxon>Eukaryota</taxon>
        <taxon>Metazoa</taxon>
        <taxon>Ecdysozoa</taxon>
        <taxon>Arthropoda</taxon>
        <taxon>Chelicerata</taxon>
        <taxon>Arachnida</taxon>
        <taxon>Araneae</taxon>
        <taxon>Araneomorphae</taxon>
        <taxon>Entelegynae</taxon>
        <taxon>Lycosoidea</taxon>
        <taxon>Lycosidae</taxon>
        <taxon>Lycosa</taxon>
    </lineage>
</organism>
<name>TX602_LYCSI</name>
<comment type="subcellular location">
    <subcellularLocation>
        <location evidence="5">Secreted</location>
    </subcellularLocation>
</comment>
<comment type="tissue specificity">
    <text evidence="5">Expressed by the venom gland.</text>
</comment>
<comment type="domain">
    <text evidence="4">The presence of a 'disulfide through disulfide knot' structurally defines this protein as a knottin.</text>
</comment>
<comment type="similarity">
    <text evidence="4">Belongs to the neurotoxin 19 (CSTX) family. 06 (U6-Lctx) subfamily.</text>
</comment>
<proteinExistence type="inferred from homology"/>
<reference key="1">
    <citation type="journal article" date="2010" name="Zoology">
        <title>Transcriptome analysis of the venom glands of the Chinese wolf spider Lycosa singoriensis.</title>
        <authorList>
            <person name="Zhang Y."/>
            <person name="Chen J."/>
            <person name="Tang X."/>
            <person name="Wang F."/>
            <person name="Jiang L."/>
            <person name="Xiong X."/>
            <person name="Wang M."/>
            <person name="Rong M."/>
            <person name="Liu Z."/>
            <person name="Liang S."/>
        </authorList>
    </citation>
    <scope>NUCLEOTIDE SEQUENCE [LARGE SCALE MRNA]</scope>
    <source>
        <tissue>Venom gland</tissue>
    </source>
</reference>
<evidence type="ECO:0000250" key="1"/>
<evidence type="ECO:0000250" key="2">
    <source>
        <dbReference type="UniProtKB" id="P83257"/>
    </source>
</evidence>
<evidence type="ECO:0000255" key="3"/>
<evidence type="ECO:0000305" key="4"/>
<evidence type="ECO:0000305" key="5">
    <source>
    </source>
</evidence>
<protein>
    <recommendedName>
        <fullName>U6-lycotoxin-Ls1c</fullName>
        <shortName>U6-LCTX-Ls1c</shortName>
    </recommendedName>
    <alternativeName>
        <fullName>Toxin-like structure LSTX-F2</fullName>
    </alternativeName>
</protein>
<accession>B6DCV2</accession>
<sequence length="75" mass="8401">MKLLLFTALVLVVISLIEVEAENERACIPLEKECTKTPGNCCSGLKCNCYRRFEQGVAKGIQCWCIEKDVTYKGV</sequence>